<accession>Q3T0G5</accession>
<organism>
    <name type="scientific">Bos taurus</name>
    <name type="common">Bovine</name>
    <dbReference type="NCBI Taxonomy" id="9913"/>
    <lineage>
        <taxon>Eukaryota</taxon>
        <taxon>Metazoa</taxon>
        <taxon>Chordata</taxon>
        <taxon>Craniata</taxon>
        <taxon>Vertebrata</taxon>
        <taxon>Euteleostomi</taxon>
        <taxon>Mammalia</taxon>
        <taxon>Eutheria</taxon>
        <taxon>Laurasiatheria</taxon>
        <taxon>Artiodactyla</taxon>
        <taxon>Ruminantia</taxon>
        <taxon>Pecora</taxon>
        <taxon>Bovidae</taxon>
        <taxon>Bovinae</taxon>
        <taxon>Bos</taxon>
    </lineage>
</organism>
<name>PLPHP_BOVIN</name>
<protein>
    <recommendedName>
        <fullName evidence="3">Pyridoxal phosphate homeostasis protein</fullName>
        <shortName evidence="3">PLP homeostasis protein</shortName>
    </recommendedName>
    <alternativeName>
        <fullName evidence="3">Proline synthase co-transcribed bacterial homolog protein</fullName>
    </alternativeName>
    <alternativeName>
        <fullName evidence="1">Pyridoxal phosphate-binding protein</fullName>
    </alternativeName>
</protein>
<comment type="function">
    <text evidence="3">Pyridoxal 5'-phosphate (PLP)-binding protein, which may be involved in intracellular homeostatic regulation of pyridoxal 5'-phosphate (PLP), the active form of vitamin B6.</text>
</comment>
<comment type="similarity">
    <text evidence="3">Belongs to the pyridoxal phosphate-binding protein YggS/PROSC family.</text>
</comment>
<feature type="chain" id="PRO_0000249596" description="Pyridoxal phosphate homeostasis protein">
    <location>
        <begin position="1"/>
        <end position="273"/>
    </location>
</feature>
<feature type="region of interest" description="Disordered" evidence="4">
    <location>
        <begin position="251"/>
        <end position="273"/>
    </location>
</feature>
<feature type="compositionally biased region" description="Basic and acidic residues" evidence="4">
    <location>
        <begin position="251"/>
        <end position="260"/>
    </location>
</feature>
<feature type="modified residue" description="Phosphoserine" evidence="1">
    <location>
        <position position="6"/>
    </location>
</feature>
<feature type="modified residue" description="N6-(pyridoxal phosphate)lysine" evidence="3">
    <location>
        <position position="47"/>
    </location>
</feature>
<feature type="modified residue" description="Phosphotyrosine" evidence="2">
    <location>
        <position position="69"/>
    </location>
</feature>
<feature type="modified residue" description="N6-succinyllysine" evidence="2">
    <location>
        <position position="125"/>
    </location>
</feature>
<feature type="modified residue" description="Phosphoserine" evidence="1">
    <location>
        <position position="226"/>
    </location>
</feature>
<feature type="modified residue" description="Phosphoserine" evidence="1">
    <location>
        <position position="244"/>
    </location>
</feature>
<proteinExistence type="evidence at transcript level"/>
<evidence type="ECO:0000250" key="1">
    <source>
        <dbReference type="UniProtKB" id="O94903"/>
    </source>
</evidence>
<evidence type="ECO:0000250" key="2">
    <source>
        <dbReference type="UniProtKB" id="Q9Z2Y8"/>
    </source>
</evidence>
<evidence type="ECO:0000255" key="3">
    <source>
        <dbReference type="HAMAP-Rule" id="MF_03225"/>
    </source>
</evidence>
<evidence type="ECO:0000256" key="4">
    <source>
        <dbReference type="SAM" id="MobiDB-lite"/>
    </source>
</evidence>
<sequence length="273" mass="29943">MWKAGSMSAELGIGFALRAVNERVQQAVARRPRDLPAIQPRLVAVSKTKPADMVIEAYSHGQRTFGENYVQELLEKASNPQILSSCPEIKWHFIGHLQKQNVNKLMAVPNLSMLETVDSVKLADKVNSAWQKKGSPERLKVMVQINTSGEASKHGLPPAEMAALVEHINAKCPSLEFVGLMTIGSFGHDLSQGPNPDFQVLLSLREELCRKLGAPPEQVELSMGMSVDFQHAIEVGSTNVRIGSTIFGERDYSKKTDKPAAELQAPEEVAQAH</sequence>
<dbReference type="EMBL" id="BC102405">
    <property type="protein sequence ID" value="AAI02406.1"/>
    <property type="molecule type" value="mRNA"/>
</dbReference>
<dbReference type="RefSeq" id="NP_001029529.1">
    <property type="nucleotide sequence ID" value="NM_001034357.1"/>
</dbReference>
<dbReference type="SMR" id="Q3T0G5"/>
<dbReference type="FunCoup" id="Q3T0G5">
    <property type="interactions" value="2577"/>
</dbReference>
<dbReference type="STRING" id="9913.ENSBTAP00000039600"/>
<dbReference type="PaxDb" id="9913-ENSBTAP00000039600"/>
<dbReference type="PeptideAtlas" id="Q3T0G5"/>
<dbReference type="Ensembl" id="ENSBTAT00000039812.5">
    <property type="protein sequence ID" value="ENSBTAP00000039600.3"/>
    <property type="gene ID" value="ENSBTAG00000011075.6"/>
</dbReference>
<dbReference type="GeneID" id="509643"/>
<dbReference type="KEGG" id="bta:509643"/>
<dbReference type="CTD" id="11212"/>
<dbReference type="VEuPathDB" id="HostDB:ENSBTAG00000011075"/>
<dbReference type="VGNC" id="VGNC:33043">
    <property type="gene designation" value="PLPBP"/>
</dbReference>
<dbReference type="eggNOG" id="KOG3157">
    <property type="taxonomic scope" value="Eukaryota"/>
</dbReference>
<dbReference type="GeneTree" id="ENSGT00390000004928"/>
<dbReference type="HOGENOM" id="CLU_059988_2_1_1"/>
<dbReference type="InParanoid" id="Q3T0G5"/>
<dbReference type="OMA" id="PLEWHMI"/>
<dbReference type="OrthoDB" id="10264196at2759"/>
<dbReference type="TreeFam" id="TF314637"/>
<dbReference type="Proteomes" id="UP000009136">
    <property type="component" value="Chromosome 27"/>
</dbReference>
<dbReference type="Bgee" id="ENSBTAG00000011075">
    <property type="expression patterns" value="Expressed in caput epididymis and 104 other cell types or tissues"/>
</dbReference>
<dbReference type="GO" id="GO:0005737">
    <property type="term" value="C:cytoplasm"/>
    <property type="evidence" value="ECO:0000318"/>
    <property type="project" value="GO_Central"/>
</dbReference>
<dbReference type="GO" id="GO:0030170">
    <property type="term" value="F:pyridoxal phosphate binding"/>
    <property type="evidence" value="ECO:0000318"/>
    <property type="project" value="GO_Central"/>
</dbReference>
<dbReference type="GO" id="GO:0042816">
    <property type="term" value="P:vitamin B6 metabolic process"/>
    <property type="evidence" value="ECO:0000318"/>
    <property type="project" value="GO_Central"/>
</dbReference>
<dbReference type="CDD" id="cd06822">
    <property type="entry name" value="PLPDE_III_YBL036c_euk"/>
    <property type="match status" value="1"/>
</dbReference>
<dbReference type="FunFam" id="3.20.20.10:FF:000007">
    <property type="entry name" value="Pyridoxal phosphate homeostasis protein"/>
    <property type="match status" value="1"/>
</dbReference>
<dbReference type="Gene3D" id="3.20.20.10">
    <property type="entry name" value="Alanine racemase"/>
    <property type="match status" value="1"/>
</dbReference>
<dbReference type="HAMAP" id="MF_02087">
    <property type="entry name" value="PLP_homeostasis"/>
    <property type="match status" value="1"/>
</dbReference>
<dbReference type="InterPro" id="IPR001608">
    <property type="entry name" value="Ala_racemase_N"/>
</dbReference>
<dbReference type="InterPro" id="IPR029066">
    <property type="entry name" value="PLP-binding_barrel"/>
</dbReference>
<dbReference type="InterPro" id="IPR011078">
    <property type="entry name" value="PyrdxlP_homeostasis"/>
</dbReference>
<dbReference type="NCBIfam" id="TIGR00044">
    <property type="entry name" value="YggS family pyridoxal phosphate-dependent enzyme"/>
    <property type="match status" value="1"/>
</dbReference>
<dbReference type="PANTHER" id="PTHR10146">
    <property type="entry name" value="PROLINE SYNTHETASE CO-TRANSCRIBED BACTERIAL HOMOLOG PROTEIN"/>
    <property type="match status" value="1"/>
</dbReference>
<dbReference type="PANTHER" id="PTHR10146:SF14">
    <property type="entry name" value="PYRIDOXAL PHOSPHATE HOMEOSTASIS PROTEIN"/>
    <property type="match status" value="1"/>
</dbReference>
<dbReference type="Pfam" id="PF01168">
    <property type="entry name" value="Ala_racemase_N"/>
    <property type="match status" value="1"/>
</dbReference>
<dbReference type="PIRSF" id="PIRSF004848">
    <property type="entry name" value="YBL036c_PLPDEIII"/>
    <property type="match status" value="1"/>
</dbReference>
<dbReference type="SUPFAM" id="SSF51419">
    <property type="entry name" value="PLP-binding barrel"/>
    <property type="match status" value="1"/>
</dbReference>
<dbReference type="PROSITE" id="PS01211">
    <property type="entry name" value="UPF0001"/>
    <property type="match status" value="1"/>
</dbReference>
<reference key="1">
    <citation type="submission" date="2005-08" db="EMBL/GenBank/DDBJ databases">
        <authorList>
            <consortium name="NIH - Mammalian Gene Collection (MGC) project"/>
        </authorList>
    </citation>
    <scope>NUCLEOTIDE SEQUENCE [LARGE SCALE MRNA]</scope>
    <source>
        <strain>Crossbred X Angus</strain>
        <tissue>Ileum</tissue>
    </source>
</reference>
<gene>
    <name evidence="3" type="primary">PLPBP</name>
    <name evidence="3" type="synonym">PROSC</name>
</gene>
<keyword id="KW-0597">Phosphoprotein</keyword>
<keyword id="KW-0663">Pyridoxal phosphate</keyword>
<keyword id="KW-1185">Reference proteome</keyword>